<dbReference type="EMBL" id="AY191015">
    <property type="protein sequence ID" value="AAO39078.1"/>
    <property type="molecule type" value="Genomic_DNA"/>
</dbReference>
<dbReference type="EMBL" id="AAFI02000085">
    <property type="protein sequence ID" value="EAL64271.1"/>
    <property type="molecule type" value="Genomic_DNA"/>
</dbReference>
<dbReference type="RefSeq" id="XP_637841.1">
    <property type="nucleotide sequence ID" value="XM_632749.1"/>
</dbReference>
<dbReference type="SMR" id="Q86CR8"/>
<dbReference type="FunCoup" id="Q86CR8">
    <property type="interactions" value="438"/>
</dbReference>
<dbReference type="STRING" id="44689.Q86CR8"/>
<dbReference type="GlyGen" id="Q86CR8">
    <property type="glycosylation" value="1 site"/>
</dbReference>
<dbReference type="PaxDb" id="44689-DDB0191413"/>
<dbReference type="EnsemblProtists" id="EAL64271">
    <property type="protein sequence ID" value="EAL64271"/>
    <property type="gene ID" value="DDB_G0286191"/>
</dbReference>
<dbReference type="GeneID" id="8625555"/>
<dbReference type="KEGG" id="ddi:DDB_G0286191"/>
<dbReference type="dictyBase" id="DDB_G0286191">
    <property type="gene designation" value="atg8a"/>
</dbReference>
<dbReference type="VEuPathDB" id="AmoebaDB:DDB_G0286191"/>
<dbReference type="eggNOG" id="KOG1654">
    <property type="taxonomic scope" value="Eukaryota"/>
</dbReference>
<dbReference type="HOGENOM" id="CLU_119276_0_1_1"/>
<dbReference type="InParanoid" id="Q86CR8"/>
<dbReference type="OMA" id="AKMKWMF"/>
<dbReference type="PhylomeDB" id="Q86CR8"/>
<dbReference type="Reactome" id="R-DDI-1632852">
    <property type="pathway name" value="Macroautophagy"/>
</dbReference>
<dbReference type="Reactome" id="R-DDI-5205685">
    <property type="pathway name" value="PINK1-PRKN Mediated Mitophagy"/>
</dbReference>
<dbReference type="Reactome" id="R-DDI-8854214">
    <property type="pathway name" value="TBC/RABGAPs"/>
</dbReference>
<dbReference type="Reactome" id="R-DDI-8934903">
    <property type="pathway name" value="Receptor Mediated Mitophagy"/>
</dbReference>
<dbReference type="Reactome" id="R-DDI-9664873">
    <property type="pathway name" value="Pexophagy"/>
</dbReference>
<dbReference type="Reactome" id="R-DDI-9755511">
    <property type="pathway name" value="KEAP1-NFE2L2 pathway"/>
</dbReference>
<dbReference type="PRO" id="PR:Q86CR8"/>
<dbReference type="Proteomes" id="UP000002195">
    <property type="component" value="Chromosome 4"/>
</dbReference>
<dbReference type="GO" id="GO:0005776">
    <property type="term" value="C:autophagosome"/>
    <property type="evidence" value="ECO:0000314"/>
    <property type="project" value="dictyBase"/>
</dbReference>
<dbReference type="GO" id="GO:0000421">
    <property type="term" value="C:autophagosome membrane"/>
    <property type="evidence" value="ECO:0000314"/>
    <property type="project" value="dictyBase"/>
</dbReference>
<dbReference type="GO" id="GO:0005737">
    <property type="term" value="C:cytoplasm"/>
    <property type="evidence" value="ECO:0000314"/>
    <property type="project" value="dictyBase"/>
</dbReference>
<dbReference type="GO" id="GO:0031410">
    <property type="term" value="C:cytoplasmic vesicle"/>
    <property type="evidence" value="ECO:0007669"/>
    <property type="project" value="UniProtKB-KW"/>
</dbReference>
<dbReference type="GO" id="GO:0140220">
    <property type="term" value="C:pathogen-containing vacuole"/>
    <property type="evidence" value="ECO:0000314"/>
    <property type="project" value="dictyBase"/>
</dbReference>
<dbReference type="GO" id="GO:0008429">
    <property type="term" value="F:phosphatidylethanolamine binding"/>
    <property type="evidence" value="ECO:0000318"/>
    <property type="project" value="GO_Central"/>
</dbReference>
<dbReference type="GO" id="GO:0000045">
    <property type="term" value="P:autophagosome assembly"/>
    <property type="evidence" value="ECO:0000318"/>
    <property type="project" value="GO_Central"/>
</dbReference>
<dbReference type="GO" id="GO:0097352">
    <property type="term" value="P:autophagosome maturation"/>
    <property type="evidence" value="ECO:0000315"/>
    <property type="project" value="dictyBase"/>
</dbReference>
<dbReference type="GO" id="GO:1905037">
    <property type="term" value="P:autophagosome organization"/>
    <property type="evidence" value="ECO:0000315"/>
    <property type="project" value="dictyBase"/>
</dbReference>
<dbReference type="GO" id="GO:0006995">
    <property type="term" value="P:cellular response to nitrogen starvation"/>
    <property type="evidence" value="ECO:0000315"/>
    <property type="project" value="dictyBase"/>
</dbReference>
<dbReference type="GO" id="GO:0050830">
    <property type="term" value="P:defense response to Gram-positive bacterium"/>
    <property type="evidence" value="ECO:0000314"/>
    <property type="project" value="dictyBase"/>
</dbReference>
<dbReference type="GO" id="GO:0006974">
    <property type="term" value="P:DNA damage response"/>
    <property type="evidence" value="ECO:0000315"/>
    <property type="project" value="dictyBase"/>
</dbReference>
<dbReference type="GO" id="GO:0016236">
    <property type="term" value="P:macroautophagy"/>
    <property type="evidence" value="ECO:0000315"/>
    <property type="project" value="dictyBase"/>
</dbReference>
<dbReference type="GO" id="GO:0000423">
    <property type="term" value="P:mitophagy"/>
    <property type="evidence" value="ECO:0000318"/>
    <property type="project" value="GO_Central"/>
</dbReference>
<dbReference type="GO" id="GO:0015031">
    <property type="term" value="P:protein transport"/>
    <property type="evidence" value="ECO:0007669"/>
    <property type="project" value="UniProtKB-KW"/>
</dbReference>
<dbReference type="GO" id="GO:0009617">
    <property type="term" value="P:response to bacterium"/>
    <property type="evidence" value="ECO:0007007"/>
    <property type="project" value="dictyBase"/>
</dbReference>
<dbReference type="GO" id="GO:1901355">
    <property type="term" value="P:response to rapamycin"/>
    <property type="evidence" value="ECO:0000315"/>
    <property type="project" value="dictyBase"/>
</dbReference>
<dbReference type="GO" id="GO:0030587">
    <property type="term" value="P:sorocarp development"/>
    <property type="evidence" value="ECO:0000315"/>
    <property type="project" value="dictyBase"/>
</dbReference>
<dbReference type="GO" id="GO:0031288">
    <property type="term" value="P:sorocarp morphogenesis"/>
    <property type="evidence" value="ECO:0000315"/>
    <property type="project" value="dictyBase"/>
</dbReference>
<dbReference type="GO" id="GO:0030435">
    <property type="term" value="P:sporulation resulting in formation of a cellular spore"/>
    <property type="evidence" value="ECO:0000315"/>
    <property type="project" value="dictyBase"/>
</dbReference>
<dbReference type="FunFam" id="3.10.20.90:FF:000635">
    <property type="entry name" value="Autophagy-related protein 8"/>
    <property type="match status" value="1"/>
</dbReference>
<dbReference type="Gene3D" id="3.10.20.90">
    <property type="entry name" value="Phosphatidylinositol 3-kinase Catalytic Subunit, Chain A, domain 1"/>
    <property type="match status" value="1"/>
</dbReference>
<dbReference type="InterPro" id="IPR004241">
    <property type="entry name" value="Atg8-like"/>
</dbReference>
<dbReference type="InterPro" id="IPR029071">
    <property type="entry name" value="Ubiquitin-like_domsf"/>
</dbReference>
<dbReference type="PANTHER" id="PTHR10969">
    <property type="entry name" value="MICROTUBULE-ASSOCIATED PROTEINS 1A/1B LIGHT CHAIN 3-RELATED"/>
    <property type="match status" value="1"/>
</dbReference>
<dbReference type="Pfam" id="PF02991">
    <property type="entry name" value="ATG8"/>
    <property type="match status" value="1"/>
</dbReference>
<dbReference type="SUPFAM" id="SSF54236">
    <property type="entry name" value="Ubiquitin-like"/>
    <property type="match status" value="1"/>
</dbReference>
<evidence type="ECO:0000250" key="1"/>
<evidence type="ECO:0000269" key="2">
    <source>
    </source>
</evidence>
<evidence type="ECO:0000269" key="3">
    <source>
    </source>
</evidence>
<evidence type="ECO:0000269" key="4">
    <source>
    </source>
</evidence>
<evidence type="ECO:0000305" key="5"/>
<keyword id="KW-0072">Autophagy</keyword>
<keyword id="KW-0968">Cytoplasmic vesicle</keyword>
<keyword id="KW-0449">Lipoprotein</keyword>
<keyword id="KW-0472">Membrane</keyword>
<keyword id="KW-0653">Protein transport</keyword>
<keyword id="KW-1185">Reference proteome</keyword>
<keyword id="KW-0813">Transport</keyword>
<keyword id="KW-0833">Ubl conjugation pathway</keyword>
<organism>
    <name type="scientific">Dictyostelium discoideum</name>
    <name type="common">Social amoeba</name>
    <dbReference type="NCBI Taxonomy" id="44689"/>
    <lineage>
        <taxon>Eukaryota</taxon>
        <taxon>Amoebozoa</taxon>
        <taxon>Evosea</taxon>
        <taxon>Eumycetozoa</taxon>
        <taxon>Dictyostelia</taxon>
        <taxon>Dictyosteliales</taxon>
        <taxon>Dictyosteliaceae</taxon>
        <taxon>Dictyostelium</taxon>
    </lineage>
</organism>
<gene>
    <name type="primary">atg8</name>
    <name type="synonym">apg8</name>
    <name type="ORF">DDB_G0286191</name>
</gene>
<reference key="1">
    <citation type="journal article" date="2003" name="J. Biol. Chem.">
        <title>Macroautophagy is required for multicellular development of the social amoeba Dictyostelium discoideum.</title>
        <authorList>
            <person name="Otto G.P."/>
            <person name="Wu M.Y."/>
            <person name="Kazgan N."/>
            <person name="Anderson O.R."/>
            <person name="Kessin R.H."/>
        </authorList>
    </citation>
    <scope>NUCLEOTIDE SEQUENCE [GENOMIC DNA]</scope>
    <scope>SUBCELLULAR LOCATION</scope>
    <scope>FUNCTION</scope>
    <source>
        <strain>AX3 / DH1</strain>
    </source>
</reference>
<reference key="2">
    <citation type="journal article" date="2005" name="Nature">
        <title>The genome of the social amoeba Dictyostelium discoideum.</title>
        <authorList>
            <person name="Eichinger L."/>
            <person name="Pachebat J.A."/>
            <person name="Gloeckner G."/>
            <person name="Rajandream M.A."/>
            <person name="Sucgang R."/>
            <person name="Berriman M."/>
            <person name="Song J."/>
            <person name="Olsen R."/>
            <person name="Szafranski K."/>
            <person name="Xu Q."/>
            <person name="Tunggal B."/>
            <person name="Kummerfeld S."/>
            <person name="Madera M."/>
            <person name="Konfortov B.A."/>
            <person name="Rivero F."/>
            <person name="Bankier A.T."/>
            <person name="Lehmann R."/>
            <person name="Hamlin N."/>
            <person name="Davies R."/>
            <person name="Gaudet P."/>
            <person name="Fey P."/>
            <person name="Pilcher K."/>
            <person name="Chen G."/>
            <person name="Saunders D."/>
            <person name="Sodergren E.J."/>
            <person name="Davis P."/>
            <person name="Kerhornou A."/>
            <person name="Nie X."/>
            <person name="Hall N."/>
            <person name="Anjard C."/>
            <person name="Hemphill L."/>
            <person name="Bason N."/>
            <person name="Farbrother P."/>
            <person name="Desany B."/>
            <person name="Just E."/>
            <person name="Morio T."/>
            <person name="Rost R."/>
            <person name="Churcher C.M."/>
            <person name="Cooper J."/>
            <person name="Haydock S."/>
            <person name="van Driessche N."/>
            <person name="Cronin A."/>
            <person name="Goodhead I."/>
            <person name="Muzny D.M."/>
            <person name="Mourier T."/>
            <person name="Pain A."/>
            <person name="Lu M."/>
            <person name="Harper D."/>
            <person name="Lindsay R."/>
            <person name="Hauser H."/>
            <person name="James K.D."/>
            <person name="Quiles M."/>
            <person name="Madan Babu M."/>
            <person name="Saito T."/>
            <person name="Buchrieser C."/>
            <person name="Wardroper A."/>
            <person name="Felder M."/>
            <person name="Thangavelu M."/>
            <person name="Johnson D."/>
            <person name="Knights A."/>
            <person name="Loulseged H."/>
            <person name="Mungall K.L."/>
            <person name="Oliver K."/>
            <person name="Price C."/>
            <person name="Quail M.A."/>
            <person name="Urushihara H."/>
            <person name="Hernandez J."/>
            <person name="Rabbinowitsch E."/>
            <person name="Steffen D."/>
            <person name="Sanders M."/>
            <person name="Ma J."/>
            <person name="Kohara Y."/>
            <person name="Sharp S."/>
            <person name="Simmonds M.N."/>
            <person name="Spiegler S."/>
            <person name="Tivey A."/>
            <person name="Sugano S."/>
            <person name="White B."/>
            <person name="Walker D."/>
            <person name="Woodward J.R."/>
            <person name="Winckler T."/>
            <person name="Tanaka Y."/>
            <person name="Shaulsky G."/>
            <person name="Schleicher M."/>
            <person name="Weinstock G.M."/>
            <person name="Rosenthal A."/>
            <person name="Cox E.C."/>
            <person name="Chisholm R.L."/>
            <person name="Gibbs R.A."/>
            <person name="Loomis W.F."/>
            <person name="Platzer M."/>
            <person name="Kay R.R."/>
            <person name="Williams J.G."/>
            <person name="Dear P.H."/>
            <person name="Noegel A.A."/>
            <person name="Barrell B.G."/>
            <person name="Kuspa A."/>
        </authorList>
    </citation>
    <scope>NUCLEOTIDE SEQUENCE [LARGE SCALE GENOMIC DNA]</scope>
    <source>
        <strain>AX4</strain>
    </source>
</reference>
<reference key="3">
    <citation type="journal article" date="2004" name="J. Biol. Chem.">
        <title>Dictyostelium macroautophagy mutants vary in the severity of their developmental defects.</title>
        <authorList>
            <person name="Otto G.P."/>
            <person name="Wu M.Y."/>
            <person name="Kazgan N."/>
            <person name="Anderson O.R."/>
            <person name="Kessin R.H."/>
        </authorList>
    </citation>
    <scope>FUNCTION</scope>
</reference>
<reference key="4">
    <citation type="journal article" date="2006" name="Cell. Microbiol.">
        <title>Dictyostelium transcriptional host cell response upon infection with Legionella.</title>
        <authorList>
            <person name="Farbrother P."/>
            <person name="Wagner C."/>
            <person name="Na J."/>
            <person name="Tunggal B."/>
            <person name="Morio T."/>
            <person name="Urushihara H."/>
            <person name="Tanaka Y."/>
            <person name="Schleicher M."/>
            <person name="Steinert M."/>
            <person name="Eichinger L."/>
        </authorList>
    </citation>
    <scope>INDUCTION</scope>
</reference>
<protein>
    <recommendedName>
        <fullName>Autophagy-related protein 8</fullName>
    </recommendedName>
    <alternativeName>
        <fullName>Autophagy-related ubiquitin-like modifier atg8</fullName>
    </alternativeName>
</protein>
<name>ATG8_DICDI</name>
<comment type="function">
    <text evidence="1 2 3">Ubiquitin-like modifier involved in autophagosome formation. Participates in membrane fusion events that take place in the secretory pathway (By similarity).</text>
</comment>
<comment type="subcellular location">
    <subcellularLocation>
        <location evidence="1">Cytoplasmic vesicle</location>
        <location evidence="1">Autophagosome membrane</location>
        <topology evidence="1">Lipid-anchor</topology>
    </subcellularLocation>
</comment>
<comment type="induction">
    <text evidence="4">By Legionella pneumophila infection.</text>
</comment>
<comment type="PTM">
    <text evidence="1">The C-terminal 3 residues of atg8 are removed by atg4 to expose Gly-119 at the C-terminus. This Gly-119 forms then a thioester bond with the 'Cys-563' of atg7 (E1-like activating enzyme) before being transferred to the 'Cys-288' of atg3 (the specific E2 conjugating enzyme), in order to be finally amidated with phosphatidylethanolamine. This lipid modification anchors atg8 to membranes and can be reversed by atg4, releasing soluble atg8 (By similarity).</text>
</comment>
<comment type="similarity">
    <text evidence="5">Belongs to the ATG8 family.</text>
</comment>
<proteinExistence type="evidence at transcript level"/>
<sequence length="122" mass="14097">MVHVSSFKNDHPLDKRREVAERIRSKYLDRIPVIVEKAPRSDAPDIDKKKYLVPADITVGKFVYEIRKHMTKVSAEKAIYLFVNNTIPPTAALISQIYERYKDEDGFLYITYSGENTFGSDL</sequence>
<accession>Q86CR8</accession>
<accession>Q54LZ0</accession>
<feature type="chain" id="PRO_0000327833" description="Autophagy-related protein 8">
    <location>
        <begin position="1"/>
        <end position="119"/>
    </location>
</feature>
<feature type="propeptide" id="PRO_0000327834" description="Removed in mature form">
    <location>
        <begin position="120"/>
        <end position="122"/>
    </location>
</feature>
<feature type="site" description="Cleavage; by ATG4">
    <location>
        <begin position="119"/>
        <end position="120"/>
    </location>
</feature>
<feature type="lipid moiety-binding region" description="Phosphatidylethanolamine amidated glycine" evidence="1">
    <location>
        <position position="119"/>
    </location>
</feature>